<organism>
    <name type="scientific">Drosophila melanogaster</name>
    <name type="common">Fruit fly</name>
    <dbReference type="NCBI Taxonomy" id="7227"/>
    <lineage>
        <taxon>Eukaryota</taxon>
        <taxon>Metazoa</taxon>
        <taxon>Ecdysozoa</taxon>
        <taxon>Arthropoda</taxon>
        <taxon>Hexapoda</taxon>
        <taxon>Insecta</taxon>
        <taxon>Pterygota</taxon>
        <taxon>Neoptera</taxon>
        <taxon>Endopterygota</taxon>
        <taxon>Diptera</taxon>
        <taxon>Brachycera</taxon>
        <taxon>Muscomorpha</taxon>
        <taxon>Ephydroidea</taxon>
        <taxon>Drosophilidae</taxon>
        <taxon>Drosophila</taxon>
        <taxon>Sophophora</taxon>
    </lineage>
</organism>
<gene>
    <name type="primary">PpV</name>
    <name type="synonym">PPPV6A</name>
    <name type="ORF">CG12217</name>
</gene>
<reference key="1">
    <citation type="journal article" date="1993" name="EMBO J.">
        <title>Drosophila protein phosphatase V functionally complements a SIT4 mutant in Saccharomyces cerevisiae and its amino-terminal region can confer this complementation to a heterologous phosphatase catalytic domain.</title>
        <authorList>
            <person name="Mann D.J."/>
            <person name="Dombradi V."/>
            <person name="Cohen P.T.W."/>
        </authorList>
    </citation>
    <scope>NUCLEOTIDE SEQUENCE [MRNA]</scope>
    <scope>FUNCTION</scope>
    <scope>SUBCELLULAR LOCATION</scope>
    <scope>DEVELOPMENTAL STAGE</scope>
    <source>
        <strain>Oregon-R</strain>
        <tissue>Eye imaginal disk</tissue>
        <tissue>Head</tissue>
    </source>
</reference>
<reference key="2">
    <citation type="journal article" date="2000" name="Science">
        <title>The genome sequence of Drosophila melanogaster.</title>
        <authorList>
            <person name="Adams M.D."/>
            <person name="Celniker S.E."/>
            <person name="Holt R.A."/>
            <person name="Evans C.A."/>
            <person name="Gocayne J.D."/>
            <person name="Amanatides P.G."/>
            <person name="Scherer S.E."/>
            <person name="Li P.W."/>
            <person name="Hoskins R.A."/>
            <person name="Galle R.F."/>
            <person name="George R.A."/>
            <person name="Lewis S.E."/>
            <person name="Richards S."/>
            <person name="Ashburner M."/>
            <person name="Henderson S.N."/>
            <person name="Sutton G.G."/>
            <person name="Wortman J.R."/>
            <person name="Yandell M.D."/>
            <person name="Zhang Q."/>
            <person name="Chen L.X."/>
            <person name="Brandon R.C."/>
            <person name="Rogers Y.-H.C."/>
            <person name="Blazej R.G."/>
            <person name="Champe M."/>
            <person name="Pfeiffer B.D."/>
            <person name="Wan K.H."/>
            <person name="Doyle C."/>
            <person name="Baxter E.G."/>
            <person name="Helt G."/>
            <person name="Nelson C.R."/>
            <person name="Miklos G.L.G."/>
            <person name="Abril J.F."/>
            <person name="Agbayani A."/>
            <person name="An H.-J."/>
            <person name="Andrews-Pfannkoch C."/>
            <person name="Baldwin D."/>
            <person name="Ballew R.M."/>
            <person name="Basu A."/>
            <person name="Baxendale J."/>
            <person name="Bayraktaroglu L."/>
            <person name="Beasley E.M."/>
            <person name="Beeson K.Y."/>
            <person name="Benos P.V."/>
            <person name="Berman B.P."/>
            <person name="Bhandari D."/>
            <person name="Bolshakov S."/>
            <person name="Borkova D."/>
            <person name="Botchan M.R."/>
            <person name="Bouck J."/>
            <person name="Brokstein P."/>
            <person name="Brottier P."/>
            <person name="Burtis K.C."/>
            <person name="Busam D.A."/>
            <person name="Butler H."/>
            <person name="Cadieu E."/>
            <person name="Center A."/>
            <person name="Chandra I."/>
            <person name="Cherry J.M."/>
            <person name="Cawley S."/>
            <person name="Dahlke C."/>
            <person name="Davenport L.B."/>
            <person name="Davies P."/>
            <person name="de Pablos B."/>
            <person name="Delcher A."/>
            <person name="Deng Z."/>
            <person name="Mays A.D."/>
            <person name="Dew I."/>
            <person name="Dietz S.M."/>
            <person name="Dodson K."/>
            <person name="Doup L.E."/>
            <person name="Downes M."/>
            <person name="Dugan-Rocha S."/>
            <person name="Dunkov B.C."/>
            <person name="Dunn P."/>
            <person name="Durbin K.J."/>
            <person name="Evangelista C.C."/>
            <person name="Ferraz C."/>
            <person name="Ferriera S."/>
            <person name="Fleischmann W."/>
            <person name="Fosler C."/>
            <person name="Gabrielian A.E."/>
            <person name="Garg N.S."/>
            <person name="Gelbart W.M."/>
            <person name="Glasser K."/>
            <person name="Glodek A."/>
            <person name="Gong F."/>
            <person name="Gorrell J.H."/>
            <person name="Gu Z."/>
            <person name="Guan P."/>
            <person name="Harris M."/>
            <person name="Harris N.L."/>
            <person name="Harvey D.A."/>
            <person name="Heiman T.J."/>
            <person name="Hernandez J.R."/>
            <person name="Houck J."/>
            <person name="Hostin D."/>
            <person name="Houston K.A."/>
            <person name="Howland T.J."/>
            <person name="Wei M.-H."/>
            <person name="Ibegwam C."/>
            <person name="Jalali M."/>
            <person name="Kalush F."/>
            <person name="Karpen G.H."/>
            <person name="Ke Z."/>
            <person name="Kennison J.A."/>
            <person name="Ketchum K.A."/>
            <person name="Kimmel B.E."/>
            <person name="Kodira C.D."/>
            <person name="Kraft C.L."/>
            <person name="Kravitz S."/>
            <person name="Kulp D."/>
            <person name="Lai Z."/>
            <person name="Lasko P."/>
            <person name="Lei Y."/>
            <person name="Levitsky A.A."/>
            <person name="Li J.H."/>
            <person name="Li Z."/>
            <person name="Liang Y."/>
            <person name="Lin X."/>
            <person name="Liu X."/>
            <person name="Mattei B."/>
            <person name="McIntosh T.C."/>
            <person name="McLeod M.P."/>
            <person name="McPherson D."/>
            <person name="Merkulov G."/>
            <person name="Milshina N.V."/>
            <person name="Mobarry C."/>
            <person name="Morris J."/>
            <person name="Moshrefi A."/>
            <person name="Mount S.M."/>
            <person name="Moy M."/>
            <person name="Murphy B."/>
            <person name="Murphy L."/>
            <person name="Muzny D.M."/>
            <person name="Nelson D.L."/>
            <person name="Nelson D.R."/>
            <person name="Nelson K.A."/>
            <person name="Nixon K."/>
            <person name="Nusskern D.R."/>
            <person name="Pacleb J.M."/>
            <person name="Palazzolo M."/>
            <person name="Pittman G.S."/>
            <person name="Pan S."/>
            <person name="Pollard J."/>
            <person name="Puri V."/>
            <person name="Reese M.G."/>
            <person name="Reinert K."/>
            <person name="Remington K."/>
            <person name="Saunders R.D.C."/>
            <person name="Scheeler F."/>
            <person name="Shen H."/>
            <person name="Shue B.C."/>
            <person name="Siden-Kiamos I."/>
            <person name="Simpson M."/>
            <person name="Skupski M.P."/>
            <person name="Smith T.J."/>
            <person name="Spier E."/>
            <person name="Spradling A.C."/>
            <person name="Stapleton M."/>
            <person name="Strong R."/>
            <person name="Sun E."/>
            <person name="Svirskas R."/>
            <person name="Tector C."/>
            <person name="Turner R."/>
            <person name="Venter E."/>
            <person name="Wang A.H."/>
            <person name="Wang X."/>
            <person name="Wang Z.-Y."/>
            <person name="Wassarman D.A."/>
            <person name="Weinstock G.M."/>
            <person name="Weissenbach J."/>
            <person name="Williams S.M."/>
            <person name="Woodage T."/>
            <person name="Worley K.C."/>
            <person name="Wu D."/>
            <person name="Yang S."/>
            <person name="Yao Q.A."/>
            <person name="Ye J."/>
            <person name="Yeh R.-F."/>
            <person name="Zaveri J.S."/>
            <person name="Zhan M."/>
            <person name="Zhang G."/>
            <person name="Zhao Q."/>
            <person name="Zheng L."/>
            <person name="Zheng X.H."/>
            <person name="Zhong F.N."/>
            <person name="Zhong W."/>
            <person name="Zhou X."/>
            <person name="Zhu S.C."/>
            <person name="Zhu X."/>
            <person name="Smith H.O."/>
            <person name="Gibbs R.A."/>
            <person name="Myers E.W."/>
            <person name="Rubin G.M."/>
            <person name="Venter J.C."/>
        </authorList>
    </citation>
    <scope>NUCLEOTIDE SEQUENCE [LARGE SCALE GENOMIC DNA]</scope>
    <source>
        <strain>Berkeley</strain>
    </source>
</reference>
<reference key="3">
    <citation type="journal article" date="2002" name="Genome Biol.">
        <title>Annotation of the Drosophila melanogaster euchromatic genome: a systematic review.</title>
        <authorList>
            <person name="Misra S."/>
            <person name="Crosby M.A."/>
            <person name="Mungall C.J."/>
            <person name="Matthews B.B."/>
            <person name="Campbell K.S."/>
            <person name="Hradecky P."/>
            <person name="Huang Y."/>
            <person name="Kaminker J.S."/>
            <person name="Millburn G.H."/>
            <person name="Prochnik S.E."/>
            <person name="Smith C.D."/>
            <person name="Tupy J.L."/>
            <person name="Whitfield E.J."/>
            <person name="Bayraktaroglu L."/>
            <person name="Berman B.P."/>
            <person name="Bettencourt B.R."/>
            <person name="Celniker S.E."/>
            <person name="de Grey A.D.N.J."/>
            <person name="Drysdale R.A."/>
            <person name="Harris N.L."/>
            <person name="Richter J."/>
            <person name="Russo S."/>
            <person name="Schroeder A.J."/>
            <person name="Shu S.Q."/>
            <person name="Stapleton M."/>
            <person name="Yamada C."/>
            <person name="Ashburner M."/>
            <person name="Gelbart W.M."/>
            <person name="Rubin G.M."/>
            <person name="Lewis S.E."/>
        </authorList>
    </citation>
    <scope>GENOME REANNOTATION</scope>
    <source>
        <strain>Berkeley</strain>
    </source>
</reference>
<reference key="4">
    <citation type="submission" date="2005-03" db="EMBL/GenBank/DDBJ databases">
        <authorList>
            <person name="Stapleton M."/>
            <person name="Carlson J.W."/>
            <person name="Chavez C."/>
            <person name="Frise E."/>
            <person name="George R.A."/>
            <person name="Pacleb J.M."/>
            <person name="Park S."/>
            <person name="Wan K.H."/>
            <person name="Yu C."/>
            <person name="Rubin G.M."/>
            <person name="Celniker S.E."/>
        </authorList>
    </citation>
    <scope>NUCLEOTIDE SEQUENCE [LARGE SCALE MRNA]</scope>
    <source>
        <strain>Berkeley</strain>
        <tissue>Head</tissue>
    </source>
</reference>
<reference key="5">
    <citation type="journal article" date="2002" name="Genome Biol.">
        <title>A Drosophila full-length cDNA resource.</title>
        <authorList>
            <person name="Stapleton M."/>
            <person name="Carlson J.W."/>
            <person name="Brokstein P."/>
            <person name="Yu C."/>
            <person name="Champe M."/>
            <person name="George R.A."/>
            <person name="Guarin H."/>
            <person name="Kronmiller B."/>
            <person name="Pacleb J.M."/>
            <person name="Park S."/>
            <person name="Wan K.H."/>
            <person name="Rubin G.M."/>
            <person name="Celniker S.E."/>
        </authorList>
    </citation>
    <scope>NUCLEOTIDE SEQUENCE [LARGE SCALE MRNA] OF 7-303</scope>
    <source>
        <strain>Berkeley</strain>
        <tissue>Embryo</tissue>
    </source>
</reference>
<comment type="function">
    <text evidence="2">May be involved in controlling cellularization or in regulating transcription of the genes involved in this process.</text>
</comment>
<comment type="catalytic activity">
    <reaction>
        <text>O-phospho-L-seryl-[protein] + H2O = L-seryl-[protein] + phosphate</text>
        <dbReference type="Rhea" id="RHEA:20629"/>
        <dbReference type="Rhea" id="RHEA-COMP:9863"/>
        <dbReference type="Rhea" id="RHEA-COMP:11604"/>
        <dbReference type="ChEBI" id="CHEBI:15377"/>
        <dbReference type="ChEBI" id="CHEBI:29999"/>
        <dbReference type="ChEBI" id="CHEBI:43474"/>
        <dbReference type="ChEBI" id="CHEBI:83421"/>
        <dbReference type="EC" id="3.1.3.16"/>
    </reaction>
</comment>
<comment type="catalytic activity">
    <reaction>
        <text>O-phospho-L-threonyl-[protein] + H2O = L-threonyl-[protein] + phosphate</text>
        <dbReference type="Rhea" id="RHEA:47004"/>
        <dbReference type="Rhea" id="RHEA-COMP:11060"/>
        <dbReference type="Rhea" id="RHEA-COMP:11605"/>
        <dbReference type="ChEBI" id="CHEBI:15377"/>
        <dbReference type="ChEBI" id="CHEBI:30013"/>
        <dbReference type="ChEBI" id="CHEBI:43474"/>
        <dbReference type="ChEBI" id="CHEBI:61977"/>
        <dbReference type="EC" id="3.1.3.16"/>
    </reaction>
</comment>
<comment type="cofactor">
    <cofactor evidence="1">
        <name>Mn(2+)</name>
        <dbReference type="ChEBI" id="CHEBI:29035"/>
    </cofactor>
    <text evidence="1">Binds 2 manganese ions per subunit.</text>
</comment>
<comment type="subcellular location">
    <subcellularLocation>
        <location evidence="2">Cytoplasm</location>
    </subcellularLocation>
</comment>
<comment type="developmental stage">
    <text evidence="2">Expressed at highest levels in 2-4 hours embryos.</text>
</comment>
<comment type="similarity">
    <text evidence="3">Belongs to the PPP phosphatase family. PP-6 (PP-V) subfamily.</text>
</comment>
<comment type="sequence caution" evidence="3">
    <conflict type="erroneous initiation">
        <sequence resource="EMBL-CDS" id="AAM51039"/>
    </conflict>
</comment>
<proteinExistence type="evidence at transcript level"/>
<protein>
    <recommendedName>
        <fullName>Serine/threonine-protein phosphatase 6 catalytic subunit</fullName>
        <shortName>PP6C</shortName>
        <ecNumber>3.1.3.16</ecNumber>
    </recommendedName>
    <alternativeName>
        <fullName>Phosphatase V</fullName>
        <shortName>PP-V</shortName>
    </alternativeName>
</protein>
<name>PPP6_DROME</name>
<sequence length="303" mass="34759">MGDVDKWIEDVKKCKYLPENELKKLCEMVCDILLEETNILPVSTPVTVCGDIHGQFYDLEQLFRTGGQVPHTNYIFMGDFVDRGYYSLETFTRLLTLKARYPSRITLLRGNHETRQITKVYGFFDECFSKYGNANGWKYCCKVFDLLTIAAIIDEEVLCVHGGLSPEIITLDQIRTIDRNGEIPYKGAFCDLVWSDPEDMEYWGQSPRGAGWLFGHNVTKDFMAINNLNLICRAHQLVNEGIKYMFDGKLVTVWSAPNYCYRCGNVAAILSFETAEKRQTKIFLAVPDAERVIPKQNTTPYFL</sequence>
<keyword id="KW-0963">Cytoplasm</keyword>
<keyword id="KW-0378">Hydrolase</keyword>
<keyword id="KW-0464">Manganese</keyword>
<keyword id="KW-0479">Metal-binding</keyword>
<keyword id="KW-0904">Protein phosphatase</keyword>
<keyword id="KW-1185">Reference proteome</keyword>
<feature type="chain" id="PRO_0000058880" description="Serine/threonine-protein phosphatase 6 catalytic subunit">
    <location>
        <begin position="1"/>
        <end position="303"/>
    </location>
</feature>
<feature type="active site" description="Proton donor" evidence="1">
    <location>
        <position position="112"/>
    </location>
</feature>
<feature type="binding site" evidence="1">
    <location>
        <position position="51"/>
    </location>
    <ligand>
        <name>Mn(2+)</name>
        <dbReference type="ChEBI" id="CHEBI:29035"/>
        <label>1</label>
    </ligand>
</feature>
<feature type="binding site" evidence="1">
    <location>
        <position position="53"/>
    </location>
    <ligand>
        <name>Mn(2+)</name>
        <dbReference type="ChEBI" id="CHEBI:29035"/>
        <label>1</label>
    </ligand>
</feature>
<feature type="binding site" evidence="1">
    <location>
        <position position="79"/>
    </location>
    <ligand>
        <name>Mn(2+)</name>
        <dbReference type="ChEBI" id="CHEBI:29035"/>
        <label>1</label>
    </ligand>
</feature>
<feature type="binding site" evidence="1">
    <location>
        <position position="79"/>
    </location>
    <ligand>
        <name>Mn(2+)</name>
        <dbReference type="ChEBI" id="CHEBI:29035"/>
        <label>2</label>
    </ligand>
</feature>
<feature type="binding site" evidence="1">
    <location>
        <position position="111"/>
    </location>
    <ligand>
        <name>Mn(2+)</name>
        <dbReference type="ChEBI" id="CHEBI:29035"/>
        <label>2</label>
    </ligand>
</feature>
<feature type="binding site" evidence="1">
    <location>
        <position position="161"/>
    </location>
    <ligand>
        <name>Mn(2+)</name>
        <dbReference type="ChEBI" id="CHEBI:29035"/>
        <label>2</label>
    </ligand>
</feature>
<feature type="binding site" evidence="1">
    <location>
        <position position="235"/>
    </location>
    <ligand>
        <name>Mn(2+)</name>
        <dbReference type="ChEBI" id="CHEBI:29035"/>
        <label>2</label>
    </ligand>
</feature>
<accession>Q27884</accession>
<accession>Q5BIJ4</accession>
<accession>Q8MRZ7</accession>
<accession>Q9W3Z8</accession>
<dbReference type="EC" id="3.1.3.16"/>
<dbReference type="EMBL" id="X75980">
    <property type="protein sequence ID" value="CAA53588.1"/>
    <property type="molecule type" value="mRNA"/>
</dbReference>
<dbReference type="EMBL" id="AE014298">
    <property type="protein sequence ID" value="AAF46163.1"/>
    <property type="molecule type" value="Genomic_DNA"/>
</dbReference>
<dbReference type="EMBL" id="BT021230">
    <property type="protein sequence ID" value="AAX33378.1"/>
    <property type="molecule type" value="mRNA"/>
</dbReference>
<dbReference type="EMBL" id="AY119179">
    <property type="protein sequence ID" value="AAM51039.1"/>
    <property type="status" value="ALT_INIT"/>
    <property type="molecule type" value="mRNA"/>
</dbReference>
<dbReference type="PIR" id="S39611">
    <property type="entry name" value="S39611"/>
</dbReference>
<dbReference type="RefSeq" id="NP_001259272.1">
    <property type="nucleotide sequence ID" value="NM_001272343.1"/>
</dbReference>
<dbReference type="RefSeq" id="NP_001259273.1">
    <property type="nucleotide sequence ID" value="NM_001272344.1"/>
</dbReference>
<dbReference type="RefSeq" id="NP_001259274.1">
    <property type="nucleotide sequence ID" value="NM_001272345.1"/>
</dbReference>
<dbReference type="RefSeq" id="NP_511061.1">
    <property type="nucleotide sequence ID" value="NM_078506.3"/>
</dbReference>
<dbReference type="SMR" id="Q27884"/>
<dbReference type="BioGRID" id="58069">
    <property type="interactions" value="6"/>
</dbReference>
<dbReference type="DIP" id="DIP-20494N"/>
<dbReference type="FunCoup" id="Q27884">
    <property type="interactions" value="2540"/>
</dbReference>
<dbReference type="IntAct" id="Q27884">
    <property type="interactions" value="6"/>
</dbReference>
<dbReference type="STRING" id="7227.FBpp0070883"/>
<dbReference type="PaxDb" id="7227-FBpp0070883"/>
<dbReference type="DNASU" id="31582"/>
<dbReference type="EnsemblMetazoa" id="FBtr0070921">
    <property type="protein sequence ID" value="FBpp0070883"/>
    <property type="gene ID" value="FBgn0003139"/>
</dbReference>
<dbReference type="EnsemblMetazoa" id="FBtr0331430">
    <property type="protein sequence ID" value="FBpp0303847"/>
    <property type="gene ID" value="FBgn0003139"/>
</dbReference>
<dbReference type="EnsemblMetazoa" id="FBtr0331431">
    <property type="protein sequence ID" value="FBpp0303848"/>
    <property type="gene ID" value="FBgn0003139"/>
</dbReference>
<dbReference type="EnsemblMetazoa" id="FBtr0331432">
    <property type="protein sequence ID" value="FBpp0303849"/>
    <property type="gene ID" value="FBgn0003139"/>
</dbReference>
<dbReference type="GeneID" id="31582"/>
<dbReference type="KEGG" id="dme:Dmel_CG12217"/>
<dbReference type="AGR" id="FB:FBgn0003139"/>
<dbReference type="CTD" id="31582"/>
<dbReference type="FlyBase" id="FBgn0003139">
    <property type="gene designation" value="PpV"/>
</dbReference>
<dbReference type="VEuPathDB" id="VectorBase:FBgn0003139"/>
<dbReference type="eggNOG" id="KOG0373">
    <property type="taxonomic scope" value="Eukaryota"/>
</dbReference>
<dbReference type="GeneTree" id="ENSGT00550000074961"/>
<dbReference type="HOGENOM" id="CLU_004962_8_1_1"/>
<dbReference type="InParanoid" id="Q27884"/>
<dbReference type="OMA" id="MCLKVKY"/>
<dbReference type="OrthoDB" id="1930084at2759"/>
<dbReference type="PhylomeDB" id="Q27884"/>
<dbReference type="SignaLink" id="Q27884"/>
<dbReference type="BioGRID-ORCS" id="31582">
    <property type="hits" value="0 hits in 3 CRISPR screens"/>
</dbReference>
<dbReference type="ChiTaRS" id="PpV">
    <property type="organism name" value="fly"/>
</dbReference>
<dbReference type="GenomeRNAi" id="31582"/>
<dbReference type="PRO" id="PR:Q27884"/>
<dbReference type="Proteomes" id="UP000000803">
    <property type="component" value="Chromosome X"/>
</dbReference>
<dbReference type="Bgee" id="FBgn0003139">
    <property type="expression patterns" value="Expressed in cleaving embryo and 80 other cell types or tissues"/>
</dbReference>
<dbReference type="ExpressionAtlas" id="Q27884">
    <property type="expression patterns" value="baseline and differential"/>
</dbReference>
<dbReference type="GO" id="GO:0005737">
    <property type="term" value="C:cytoplasm"/>
    <property type="evidence" value="ECO:0000314"/>
    <property type="project" value="FlyBase"/>
</dbReference>
<dbReference type="GO" id="GO:0046872">
    <property type="term" value="F:metal ion binding"/>
    <property type="evidence" value="ECO:0007669"/>
    <property type="project" value="UniProtKB-KW"/>
</dbReference>
<dbReference type="GO" id="GO:0004722">
    <property type="term" value="F:protein serine/threonine phosphatase activity"/>
    <property type="evidence" value="ECO:0000255"/>
    <property type="project" value="FlyBase"/>
</dbReference>
<dbReference type="GO" id="GO:0000082">
    <property type="term" value="P:G1/S transition of mitotic cell cycle"/>
    <property type="evidence" value="ECO:0000316"/>
    <property type="project" value="FlyBase"/>
</dbReference>
<dbReference type="GO" id="GO:0000278">
    <property type="term" value="P:mitotic cell cycle"/>
    <property type="evidence" value="ECO:0000315"/>
    <property type="project" value="FlyBase"/>
</dbReference>
<dbReference type="GO" id="GO:0046329">
    <property type="term" value="P:negative regulation of JNK cascade"/>
    <property type="evidence" value="ECO:0000315"/>
    <property type="project" value="FlyBase"/>
</dbReference>
<dbReference type="CDD" id="cd07415">
    <property type="entry name" value="MPP_PP2A_PP4_PP6"/>
    <property type="match status" value="1"/>
</dbReference>
<dbReference type="FunFam" id="3.60.21.10:FF:000005">
    <property type="entry name" value="Serine/threonine-protein phosphatase"/>
    <property type="match status" value="1"/>
</dbReference>
<dbReference type="Gene3D" id="3.60.21.10">
    <property type="match status" value="1"/>
</dbReference>
<dbReference type="InterPro" id="IPR004843">
    <property type="entry name" value="Calcineurin-like_PHP_ApaH"/>
</dbReference>
<dbReference type="InterPro" id="IPR029052">
    <property type="entry name" value="Metallo-depent_PP-like"/>
</dbReference>
<dbReference type="InterPro" id="IPR047129">
    <property type="entry name" value="PPA2-like"/>
</dbReference>
<dbReference type="InterPro" id="IPR006186">
    <property type="entry name" value="Ser/Thr-sp_prot-phosphatase"/>
</dbReference>
<dbReference type="PANTHER" id="PTHR45619">
    <property type="entry name" value="SERINE/THREONINE-PROTEIN PHOSPHATASE PP2A-RELATED"/>
    <property type="match status" value="1"/>
</dbReference>
<dbReference type="Pfam" id="PF00149">
    <property type="entry name" value="Metallophos"/>
    <property type="match status" value="1"/>
</dbReference>
<dbReference type="PRINTS" id="PR00114">
    <property type="entry name" value="STPHPHTASE"/>
</dbReference>
<dbReference type="SMART" id="SM00156">
    <property type="entry name" value="PP2Ac"/>
    <property type="match status" value="1"/>
</dbReference>
<dbReference type="SUPFAM" id="SSF56300">
    <property type="entry name" value="Metallo-dependent phosphatases"/>
    <property type="match status" value="1"/>
</dbReference>
<dbReference type="PROSITE" id="PS00125">
    <property type="entry name" value="SER_THR_PHOSPHATASE"/>
    <property type="match status" value="1"/>
</dbReference>
<evidence type="ECO:0000250" key="1"/>
<evidence type="ECO:0000269" key="2">
    <source>
    </source>
</evidence>
<evidence type="ECO:0000305" key="3"/>